<keyword id="KW-0963">Cytoplasm</keyword>
<keyword id="KW-0690">Ribosome biogenesis</keyword>
<name>RBFA_CHLFF</name>
<gene>
    <name evidence="1" type="primary">rbfA</name>
    <name type="ordered locus">CF0543</name>
</gene>
<protein>
    <recommendedName>
        <fullName evidence="1">Ribosome-binding factor A</fullName>
    </recommendedName>
</protein>
<proteinExistence type="inferred from homology"/>
<dbReference type="EMBL" id="AP006861">
    <property type="protein sequence ID" value="BAE81315.1"/>
    <property type="molecule type" value="Genomic_DNA"/>
</dbReference>
<dbReference type="RefSeq" id="WP_011458095.1">
    <property type="nucleotide sequence ID" value="NC_007899.1"/>
</dbReference>
<dbReference type="SMR" id="Q254H3"/>
<dbReference type="STRING" id="264202.CF0543"/>
<dbReference type="KEGG" id="cfe:CF0543"/>
<dbReference type="eggNOG" id="COG0858">
    <property type="taxonomic scope" value="Bacteria"/>
</dbReference>
<dbReference type="HOGENOM" id="CLU_089475_6_3_0"/>
<dbReference type="OrthoDB" id="21494at2"/>
<dbReference type="Proteomes" id="UP000001260">
    <property type="component" value="Chromosome"/>
</dbReference>
<dbReference type="GO" id="GO:0005829">
    <property type="term" value="C:cytosol"/>
    <property type="evidence" value="ECO:0007669"/>
    <property type="project" value="TreeGrafter"/>
</dbReference>
<dbReference type="GO" id="GO:0043024">
    <property type="term" value="F:ribosomal small subunit binding"/>
    <property type="evidence" value="ECO:0007669"/>
    <property type="project" value="TreeGrafter"/>
</dbReference>
<dbReference type="GO" id="GO:0030490">
    <property type="term" value="P:maturation of SSU-rRNA"/>
    <property type="evidence" value="ECO:0007669"/>
    <property type="project" value="UniProtKB-UniRule"/>
</dbReference>
<dbReference type="Gene3D" id="3.30.300.20">
    <property type="match status" value="1"/>
</dbReference>
<dbReference type="HAMAP" id="MF_00003">
    <property type="entry name" value="RbfA"/>
    <property type="match status" value="1"/>
</dbReference>
<dbReference type="InterPro" id="IPR015946">
    <property type="entry name" value="KH_dom-like_a/b"/>
</dbReference>
<dbReference type="InterPro" id="IPR000238">
    <property type="entry name" value="RbfA"/>
</dbReference>
<dbReference type="InterPro" id="IPR023799">
    <property type="entry name" value="RbfA_dom_sf"/>
</dbReference>
<dbReference type="NCBIfam" id="TIGR00082">
    <property type="entry name" value="rbfA"/>
    <property type="match status" value="1"/>
</dbReference>
<dbReference type="PANTHER" id="PTHR33515">
    <property type="entry name" value="RIBOSOME-BINDING FACTOR A, CHLOROPLASTIC-RELATED"/>
    <property type="match status" value="1"/>
</dbReference>
<dbReference type="PANTHER" id="PTHR33515:SF1">
    <property type="entry name" value="RIBOSOME-BINDING FACTOR A, CHLOROPLASTIC-RELATED"/>
    <property type="match status" value="1"/>
</dbReference>
<dbReference type="Pfam" id="PF02033">
    <property type="entry name" value="RBFA"/>
    <property type="match status" value="1"/>
</dbReference>
<dbReference type="SUPFAM" id="SSF89919">
    <property type="entry name" value="Ribosome-binding factor A, RbfA"/>
    <property type="match status" value="1"/>
</dbReference>
<organism>
    <name type="scientific">Chlamydia felis (strain Fe/C-56)</name>
    <name type="common">Chlamydophila felis</name>
    <dbReference type="NCBI Taxonomy" id="264202"/>
    <lineage>
        <taxon>Bacteria</taxon>
        <taxon>Pseudomonadati</taxon>
        <taxon>Chlamydiota</taxon>
        <taxon>Chlamydiia</taxon>
        <taxon>Chlamydiales</taxon>
        <taxon>Chlamydiaceae</taxon>
        <taxon>Chlamydia/Chlamydophila group</taxon>
        <taxon>Chlamydia</taxon>
    </lineage>
</organism>
<evidence type="ECO:0000255" key="1">
    <source>
        <dbReference type="HAMAP-Rule" id="MF_00003"/>
    </source>
</evidence>
<feature type="chain" id="PRO_1000000089" description="Ribosome-binding factor A">
    <location>
        <begin position="1"/>
        <end position="120"/>
    </location>
</feature>
<accession>Q254H3</accession>
<reference key="1">
    <citation type="journal article" date="2006" name="DNA Res.">
        <title>Genome sequence of the cat pathogen, Chlamydophila felis.</title>
        <authorList>
            <person name="Azuma Y."/>
            <person name="Hirakawa H."/>
            <person name="Yamashita A."/>
            <person name="Cai Y."/>
            <person name="Rahman M.A."/>
            <person name="Suzuki H."/>
            <person name="Mitaku S."/>
            <person name="Toh H."/>
            <person name="Goto S."/>
            <person name="Murakami T."/>
            <person name="Sugi K."/>
            <person name="Hayashi H."/>
            <person name="Fukushi H."/>
            <person name="Hattori M."/>
            <person name="Kuhara S."/>
            <person name="Shirai M."/>
        </authorList>
    </citation>
    <scope>NUCLEOTIDE SEQUENCE [LARGE SCALE GENOMIC DNA]</scope>
    <source>
        <strain>Fe/C-56</strain>
    </source>
</reference>
<comment type="function">
    <text evidence="1">One of several proteins that assist in the late maturation steps of the functional core of the 30S ribosomal subunit. Associates with free 30S ribosomal subunits (but not with 30S subunits that are part of 70S ribosomes or polysomes). Required for efficient processing of 16S rRNA. May interact with the 5'-terminal helix region of 16S rRNA.</text>
</comment>
<comment type="subunit">
    <text evidence="1">Monomer. Binds 30S ribosomal subunits, but not 50S ribosomal subunits or 70S ribosomes.</text>
</comment>
<comment type="subcellular location">
    <subcellularLocation>
        <location evidence="1">Cytoplasm</location>
    </subcellularLocation>
</comment>
<comment type="similarity">
    <text evidence="1">Belongs to the RbfA family.</text>
</comment>
<sequence length="120" mass="13929">MAENRRIQKVNSLIREAIANVILKDVKHPKISNRWITVTRVCLSKDLHTARVYVSIMPHENTSAETLKALKASAGFIAYRASKGVFLKYFPEISFYLEDIFSPQDHIENLLWKIREQDKN</sequence>